<name>Y1492_BRADU</name>
<gene>
    <name type="ordered locus">blr1492</name>
</gene>
<accession>Q89UC5</accession>
<protein>
    <recommendedName>
        <fullName evidence="1">UPF0301 protein blr1492</fullName>
    </recommendedName>
</protein>
<evidence type="ECO:0000255" key="1">
    <source>
        <dbReference type="HAMAP-Rule" id="MF_00758"/>
    </source>
</evidence>
<evidence type="ECO:0000256" key="2">
    <source>
        <dbReference type="SAM" id="MobiDB-lite"/>
    </source>
</evidence>
<proteinExistence type="inferred from homology"/>
<comment type="similarity">
    <text evidence="1">Belongs to the UPF0301 (AlgH) family.</text>
</comment>
<reference key="1">
    <citation type="journal article" date="2002" name="DNA Res.">
        <title>Complete genomic sequence of nitrogen-fixing symbiotic bacterium Bradyrhizobium japonicum USDA110.</title>
        <authorList>
            <person name="Kaneko T."/>
            <person name="Nakamura Y."/>
            <person name="Sato S."/>
            <person name="Minamisawa K."/>
            <person name="Uchiumi T."/>
            <person name="Sasamoto S."/>
            <person name="Watanabe A."/>
            <person name="Idesawa K."/>
            <person name="Iriguchi M."/>
            <person name="Kawashima K."/>
            <person name="Kohara M."/>
            <person name="Matsumoto M."/>
            <person name="Shimpo S."/>
            <person name="Tsuruoka H."/>
            <person name="Wada T."/>
            <person name="Yamada M."/>
            <person name="Tabata S."/>
        </authorList>
    </citation>
    <scope>NUCLEOTIDE SEQUENCE [LARGE SCALE GENOMIC DNA]</scope>
    <source>
        <strain>JCM 10833 / BCRC 13528 / IAM 13628 / NBRC 14792 / USDA 110</strain>
    </source>
</reference>
<feature type="chain" id="PRO_0000214309" description="UPF0301 protein blr1492">
    <location>
        <begin position="1"/>
        <end position="214"/>
    </location>
</feature>
<feature type="region of interest" description="Disordered" evidence="2">
    <location>
        <begin position="1"/>
        <end position="22"/>
    </location>
</feature>
<organism>
    <name type="scientific">Bradyrhizobium diazoefficiens (strain JCM 10833 / BCRC 13528 / IAM 13628 / NBRC 14792 / USDA 110)</name>
    <dbReference type="NCBI Taxonomy" id="224911"/>
    <lineage>
        <taxon>Bacteria</taxon>
        <taxon>Pseudomonadati</taxon>
        <taxon>Pseudomonadota</taxon>
        <taxon>Alphaproteobacteria</taxon>
        <taxon>Hyphomicrobiales</taxon>
        <taxon>Nitrobacteraceae</taxon>
        <taxon>Bradyrhizobium</taxon>
    </lineage>
</organism>
<dbReference type="EMBL" id="BA000040">
    <property type="protein sequence ID" value="BAC46757.1"/>
    <property type="molecule type" value="Genomic_DNA"/>
</dbReference>
<dbReference type="RefSeq" id="NP_768132.1">
    <property type="nucleotide sequence ID" value="NC_004463.1"/>
</dbReference>
<dbReference type="RefSeq" id="WP_011084308.1">
    <property type="nucleotide sequence ID" value="NC_004463.1"/>
</dbReference>
<dbReference type="SMR" id="Q89UC5"/>
<dbReference type="FunCoup" id="Q89UC5">
    <property type="interactions" value="308"/>
</dbReference>
<dbReference type="STRING" id="224911.AAV28_04410"/>
<dbReference type="EnsemblBacteria" id="BAC46757">
    <property type="protein sequence ID" value="BAC46757"/>
    <property type="gene ID" value="BAC46757"/>
</dbReference>
<dbReference type="GeneID" id="46488768"/>
<dbReference type="KEGG" id="bja:blr1492"/>
<dbReference type="PATRIC" id="fig|224911.44.peg.926"/>
<dbReference type="eggNOG" id="COG1678">
    <property type="taxonomic scope" value="Bacteria"/>
</dbReference>
<dbReference type="HOGENOM" id="CLU_057596_1_0_5"/>
<dbReference type="InParanoid" id="Q89UC5"/>
<dbReference type="OrthoDB" id="9807486at2"/>
<dbReference type="PhylomeDB" id="Q89UC5"/>
<dbReference type="Proteomes" id="UP000002526">
    <property type="component" value="Chromosome"/>
</dbReference>
<dbReference type="GO" id="GO:0005829">
    <property type="term" value="C:cytosol"/>
    <property type="evidence" value="ECO:0000318"/>
    <property type="project" value="GO_Central"/>
</dbReference>
<dbReference type="Gene3D" id="3.40.1740.10">
    <property type="entry name" value="VC0467-like"/>
    <property type="match status" value="1"/>
</dbReference>
<dbReference type="HAMAP" id="MF_00758">
    <property type="entry name" value="UPF0301"/>
    <property type="match status" value="1"/>
</dbReference>
<dbReference type="InterPro" id="IPR003774">
    <property type="entry name" value="AlgH-like"/>
</dbReference>
<dbReference type="NCBIfam" id="NF001268">
    <property type="entry name" value="PRK00228.1-4"/>
    <property type="match status" value="1"/>
</dbReference>
<dbReference type="PANTHER" id="PTHR30327">
    <property type="entry name" value="UNCHARACTERIZED PROTEIN YQGE"/>
    <property type="match status" value="1"/>
</dbReference>
<dbReference type="PANTHER" id="PTHR30327:SF1">
    <property type="entry name" value="UPF0301 PROTEIN YQGE"/>
    <property type="match status" value="1"/>
</dbReference>
<dbReference type="Pfam" id="PF02622">
    <property type="entry name" value="DUF179"/>
    <property type="match status" value="1"/>
</dbReference>
<dbReference type="SUPFAM" id="SSF143456">
    <property type="entry name" value="VC0467-like"/>
    <property type="match status" value="1"/>
</dbReference>
<keyword id="KW-1185">Reference proteome</keyword>
<sequence>MAPTGKRTGESTRSTGPAPPSSAGYLDGRLLIAMPVMGDARFERSVIYLCAHSAEGAMGIIVNHPAGSIDFPELLEQLGIIRKGEHIKLPENAESMKVLRGGPVDTGRGFVLHSSDFYIENATLRIDDGVCLTATVDILRAIANGSGPKHAILALGYAGWAPGQLETEIQSNGWLHCDADADLIFGDDVDEKYGRALRKIGIDPGMLSNEAGHA</sequence>